<gene>
    <name type="primary">fdhC</name>
</gene>
<feature type="chain" id="PRO_0000094723" description="Probable formate transporter">
    <location>
        <begin position="1"/>
        <end position="274"/>
    </location>
</feature>
<feature type="transmembrane region" description="Helical" evidence="1">
    <location>
        <begin position="31"/>
        <end position="51"/>
    </location>
</feature>
<feature type="transmembrane region" description="Helical" evidence="1">
    <location>
        <begin position="62"/>
        <end position="82"/>
    </location>
</feature>
<feature type="transmembrane region" description="Helical" evidence="1">
    <location>
        <begin position="118"/>
        <end position="138"/>
    </location>
</feature>
<feature type="transmembrane region" description="Helical" evidence="1">
    <location>
        <begin position="176"/>
        <end position="196"/>
    </location>
</feature>
<feature type="transmembrane region" description="Helical" evidence="1">
    <location>
        <begin position="200"/>
        <end position="220"/>
    </location>
</feature>
<feature type="transmembrane region" description="Helical" evidence="1">
    <location>
        <begin position="226"/>
        <end position="246"/>
    </location>
</feature>
<feature type="transmembrane region" description="Helical" evidence="1">
    <location>
        <begin position="248"/>
        <end position="268"/>
    </location>
</feature>
<comment type="function">
    <text>May act as a formate transporter.</text>
</comment>
<comment type="subcellular location">
    <subcellularLocation>
        <location evidence="2">Cell membrane</location>
        <topology evidence="2">Multi-pass membrane protein</topology>
    </subcellularLocation>
</comment>
<comment type="similarity">
    <text evidence="2">Belongs to the FNT transporter (TC 1.A.16) family.</text>
</comment>
<organism>
    <name type="scientific">Methanothermobacter thermautotrophicus</name>
    <name type="common">Methanobacterium thermoformicicum</name>
    <dbReference type="NCBI Taxonomy" id="145262"/>
    <lineage>
        <taxon>Archaea</taxon>
        <taxon>Methanobacteriati</taxon>
        <taxon>Methanobacteriota</taxon>
        <taxon>Methanomada group</taxon>
        <taxon>Methanobacteria</taxon>
        <taxon>Methanobacteriales</taxon>
        <taxon>Methanobacteriaceae</taxon>
        <taxon>Methanothermobacter</taxon>
    </lineage>
</organism>
<proteinExistence type="inferred from homology"/>
<accession>Q50568</accession>
<keyword id="KW-1003">Cell membrane</keyword>
<keyword id="KW-0472">Membrane</keyword>
<keyword id="KW-0812">Transmembrane</keyword>
<keyword id="KW-1133">Transmembrane helix</keyword>
<keyword id="KW-0813">Transport</keyword>
<reference key="1">
    <citation type="journal article" date="1997" name="J. Bacteriol.">
        <title>Growth- and substrate-dependent transcription of the formate dehydrogenase (fdhCAB) operon in Methanobacterium thermoformicicum Z-245.</title>
        <authorList>
            <person name="Noelling J."/>
            <person name="Reeve J.N."/>
        </authorList>
    </citation>
    <scope>NUCLEOTIDE SEQUENCE [GENOMIC DNA]</scope>
    <source>
        <strain>DSM 3720 / Z-245</strain>
    </source>
</reference>
<protein>
    <recommendedName>
        <fullName>Probable formate transporter</fullName>
    </recommendedName>
</protein>
<sequence length="274" mass="29071">MGSSFKSPADTAKACSAIAELKEKAPLGKVIVLSFLAGAYIAFGGLLAEVVTGGMAKAGYPAGLVKLVFGAVFPVGLMLVVIAGSELFTGNCMYMPLGILDKRASIMGLIRNWVTSWVFNLVGAVFVAYFLAVATGILTADPWQAGALTVAKTKALGGASFIAAGKVTKSLTWAQAFWRAVGCNWLVCLAVYLAIASDDIIGKIWGIWFPIFAFVAIGFEHSVANMFFIPVGIFLGGVTWSQFFMNNLIPVTLGNIVGGAIFVACLYWYTYLKE</sequence>
<dbReference type="EMBL" id="U52681">
    <property type="protein sequence ID" value="AAC44819.1"/>
    <property type="molecule type" value="Genomic_DNA"/>
</dbReference>
<dbReference type="RefSeq" id="WP_048176094.1">
    <property type="nucleotide sequence ID" value="NZ_CP064337.1"/>
</dbReference>
<dbReference type="SMR" id="Q50568"/>
<dbReference type="GeneID" id="24854683"/>
<dbReference type="GO" id="GO:0005886">
    <property type="term" value="C:plasma membrane"/>
    <property type="evidence" value="ECO:0007669"/>
    <property type="project" value="UniProtKB-SubCell"/>
</dbReference>
<dbReference type="GO" id="GO:0015513">
    <property type="term" value="F:high-affinity secondary active nitrite transmembrane transporter activity"/>
    <property type="evidence" value="ECO:0007669"/>
    <property type="project" value="TreeGrafter"/>
</dbReference>
<dbReference type="GO" id="GO:0015707">
    <property type="term" value="P:nitrite transport"/>
    <property type="evidence" value="ECO:0007669"/>
    <property type="project" value="TreeGrafter"/>
</dbReference>
<dbReference type="FunFam" id="1.20.1080.10:FF:000011">
    <property type="entry name" value="Formate family transporter"/>
    <property type="match status" value="1"/>
</dbReference>
<dbReference type="Gene3D" id="1.20.1080.10">
    <property type="entry name" value="Glycerol uptake facilitator protein"/>
    <property type="match status" value="1"/>
</dbReference>
<dbReference type="InterPro" id="IPR023271">
    <property type="entry name" value="Aquaporin-like"/>
</dbReference>
<dbReference type="InterPro" id="IPR000292">
    <property type="entry name" value="For/NO2_transpt"/>
</dbReference>
<dbReference type="InterPro" id="IPR024002">
    <property type="entry name" value="For/NO2_transpt_CS"/>
</dbReference>
<dbReference type="NCBIfam" id="TIGR00790">
    <property type="entry name" value="fnt"/>
    <property type="match status" value="1"/>
</dbReference>
<dbReference type="PANTHER" id="PTHR30520">
    <property type="entry name" value="FORMATE TRANSPORTER-RELATED"/>
    <property type="match status" value="1"/>
</dbReference>
<dbReference type="PANTHER" id="PTHR30520:SF6">
    <property type="entry name" value="FORMATE_NITRATE FAMILY TRANSPORTER (EUROFUNG)"/>
    <property type="match status" value="1"/>
</dbReference>
<dbReference type="Pfam" id="PF01226">
    <property type="entry name" value="Form_Nir_trans"/>
    <property type="match status" value="1"/>
</dbReference>
<dbReference type="PROSITE" id="PS01005">
    <property type="entry name" value="FORMATE_NITRITE_TP_1"/>
    <property type="match status" value="1"/>
</dbReference>
<dbReference type="PROSITE" id="PS01006">
    <property type="entry name" value="FORMATE_NITRITE_TP_2"/>
    <property type="match status" value="1"/>
</dbReference>
<evidence type="ECO:0000255" key="1"/>
<evidence type="ECO:0000305" key="2"/>
<name>FDHC_METTF</name>